<keyword id="KW-0131">Cell cycle</keyword>
<keyword id="KW-0132">Cell division</keyword>
<keyword id="KW-0137">Centromere</keyword>
<keyword id="KW-0158">Chromosome</keyword>
<keyword id="KW-0159">Chromosome partition</keyword>
<keyword id="KW-0175">Coiled coil</keyword>
<keyword id="KW-0963">Cytoplasm</keyword>
<keyword id="KW-0206">Cytoskeleton</keyword>
<keyword id="KW-0995">Kinetochore</keyword>
<keyword id="KW-0493">Microtubule</keyword>
<keyword id="KW-0498">Mitosis</keyword>
<keyword id="KW-0539">Nucleus</keyword>
<keyword id="KW-1185">Reference proteome</keyword>
<sequence>MVPEDVYQSKKSELLYLQKVTGLTDTLKAQLDELSKQVHQMHDNAECVSSVLKNWDSILNSISQATLSLLQYTENDYEVGAWSNGSRPEADKEPPLPETLVRVNVANESQE</sequence>
<gene>
    <name type="primary">DAD2</name>
    <name type="ordered locus">ADR217C</name>
</gene>
<reference key="1">
    <citation type="journal article" date="2004" name="Science">
        <title>The Ashbya gossypii genome as a tool for mapping the ancient Saccharomyces cerevisiae genome.</title>
        <authorList>
            <person name="Dietrich F.S."/>
            <person name="Voegeli S."/>
            <person name="Brachat S."/>
            <person name="Lerch A."/>
            <person name="Gates K."/>
            <person name="Steiner S."/>
            <person name="Mohr C."/>
            <person name="Poehlmann R."/>
            <person name="Luedi P."/>
            <person name="Choi S."/>
            <person name="Wing R.A."/>
            <person name="Flavier A."/>
            <person name="Gaffney T.D."/>
            <person name="Philippsen P."/>
        </authorList>
    </citation>
    <scope>NUCLEOTIDE SEQUENCE [LARGE SCALE GENOMIC DNA]</scope>
    <source>
        <strain>ATCC 10895 / CBS 109.51 / FGSC 9923 / NRRL Y-1056</strain>
    </source>
</reference>
<reference key="2">
    <citation type="journal article" date="2013" name="G3 (Bethesda)">
        <title>Genomes of Ashbya fungi isolated from insects reveal four mating-type loci, numerous translocations, lack of transposons, and distinct gene duplications.</title>
        <authorList>
            <person name="Dietrich F.S."/>
            <person name="Voegeli S."/>
            <person name="Kuo S."/>
            <person name="Philippsen P."/>
        </authorList>
    </citation>
    <scope>GENOME REANNOTATION</scope>
    <source>
        <strain>ATCC 10895 / CBS 109.51 / FGSC 9923 / NRRL Y-1056</strain>
    </source>
</reference>
<protein>
    <recommendedName>
        <fullName>DASH complex subunit DAD2</fullName>
    </recommendedName>
    <alternativeName>
        <fullName>Outer kinetochore protein DAD2</fullName>
    </alternativeName>
</protein>
<evidence type="ECO:0000250" key="1">
    <source>
        <dbReference type="UniProtKB" id="P36162"/>
    </source>
</evidence>
<evidence type="ECO:0000250" key="2">
    <source>
        <dbReference type="UniProtKB" id="Q9UTG8"/>
    </source>
</evidence>
<evidence type="ECO:0000255" key="3"/>
<evidence type="ECO:0000256" key="4">
    <source>
        <dbReference type="SAM" id="MobiDB-lite"/>
    </source>
</evidence>
<evidence type="ECO:0000305" key="5"/>
<feature type="chain" id="PRO_0000211591" description="DASH complex subunit DAD2">
    <location>
        <begin position="1"/>
        <end position="111"/>
    </location>
</feature>
<feature type="region of interest" description="Disordered" evidence="4">
    <location>
        <begin position="80"/>
        <end position="111"/>
    </location>
</feature>
<feature type="coiled-coil region" evidence="3">
    <location>
        <begin position="17"/>
        <end position="48"/>
    </location>
</feature>
<organism>
    <name type="scientific">Eremothecium gossypii (strain ATCC 10895 / CBS 109.51 / FGSC 9923 / NRRL Y-1056)</name>
    <name type="common">Yeast</name>
    <name type="synonym">Ashbya gossypii</name>
    <dbReference type="NCBI Taxonomy" id="284811"/>
    <lineage>
        <taxon>Eukaryota</taxon>
        <taxon>Fungi</taxon>
        <taxon>Dikarya</taxon>
        <taxon>Ascomycota</taxon>
        <taxon>Saccharomycotina</taxon>
        <taxon>Saccharomycetes</taxon>
        <taxon>Saccharomycetales</taxon>
        <taxon>Saccharomycetaceae</taxon>
        <taxon>Eremothecium</taxon>
    </lineage>
</organism>
<comment type="function">
    <text evidence="1">Component of the DASH complex that connects microtubules with kinetochores and couples microtubule depolymerisation to chromosome movement; it is involved in retrieving kinetochores to the spindle poles before their re-orientation on the spindle in early mitosis and allows microtubule depolymerization to pull chromosomes apart and resist detachment during anaphase. Kinetochores, consisting of a centromere-associated inner segment and a microtubule-contacting outer segment, play a crucial role in chromosome segregation by mediating the physical connection between centromeric DNA and microtubules. Kinetochores also serve as an input point for the spindle assembly checkpoint, which delays anaphase until all chromosomes have bioriented on the mitotic spindle.</text>
</comment>
<comment type="subunit">
    <text evidence="1 2">Component of the DASH complex consisting of ASK1, DAD1, DAD2, DAD3, DAD4, DAM1, DUO1, HSK3, SPC19 and SPC34, with a stoichiometry of one copy of each subunit per complex. Multiple DASH complexes oligomerize to form a ring that encircles spindle microtubules and organizes the rod-like NDC80 complexes of the outer kinetochore. DASH complex oligomerization strengthens microtubule attachments (By similarity). On cytoplasmic microtubules, DASH complexes appear to form patches instead of rings (By similarity).</text>
</comment>
<comment type="subcellular location">
    <subcellularLocation>
        <location evidence="1">Nucleus</location>
    </subcellularLocation>
    <subcellularLocation>
        <location evidence="1">Cytoplasm</location>
        <location evidence="1">Cytoskeleton</location>
        <location evidence="1">Spindle</location>
    </subcellularLocation>
    <subcellularLocation>
        <location evidence="1">Chromosome</location>
        <location evidence="1">Centromere</location>
        <location evidence="1">Kinetochore</location>
    </subcellularLocation>
</comment>
<comment type="similarity">
    <text evidence="5">Belongs to the DASH complex DAD2 family.</text>
</comment>
<name>DAD2_EREGS</name>
<accession>Q759Q6</accession>
<dbReference type="EMBL" id="AE016817">
    <property type="protein sequence ID" value="AAS52137.1"/>
    <property type="molecule type" value="Genomic_DNA"/>
</dbReference>
<dbReference type="RefSeq" id="NP_984313.1">
    <property type="nucleotide sequence ID" value="NM_209666.2"/>
</dbReference>
<dbReference type="SMR" id="Q759Q6"/>
<dbReference type="FunCoup" id="Q759Q6">
    <property type="interactions" value="45"/>
</dbReference>
<dbReference type="STRING" id="284811.Q759Q6"/>
<dbReference type="EnsemblFungi" id="AAS52137">
    <property type="protein sequence ID" value="AAS52137"/>
    <property type="gene ID" value="AGOS_ADR217C"/>
</dbReference>
<dbReference type="GeneID" id="4620475"/>
<dbReference type="KEGG" id="ago:AGOS_ADR217C"/>
<dbReference type="eggNOG" id="ENOG502S93M">
    <property type="taxonomic scope" value="Eukaryota"/>
</dbReference>
<dbReference type="HOGENOM" id="CLU_138063_1_0_1"/>
<dbReference type="InParanoid" id="Q759Q6"/>
<dbReference type="OMA" id="DYEVGVW"/>
<dbReference type="OrthoDB" id="3230169at2759"/>
<dbReference type="Proteomes" id="UP000000591">
    <property type="component" value="Chromosome IV"/>
</dbReference>
<dbReference type="GO" id="GO:0005737">
    <property type="term" value="C:cytoplasm"/>
    <property type="evidence" value="ECO:0007669"/>
    <property type="project" value="UniProtKB-KW"/>
</dbReference>
<dbReference type="GO" id="GO:0042729">
    <property type="term" value="C:DASH complex"/>
    <property type="evidence" value="ECO:0000250"/>
    <property type="project" value="UniProtKB"/>
</dbReference>
<dbReference type="GO" id="GO:0005874">
    <property type="term" value="C:microtubule"/>
    <property type="evidence" value="ECO:0007669"/>
    <property type="project" value="UniProtKB-KW"/>
</dbReference>
<dbReference type="GO" id="GO:1990023">
    <property type="term" value="C:mitotic spindle midzone"/>
    <property type="evidence" value="ECO:0000318"/>
    <property type="project" value="GO_Central"/>
</dbReference>
<dbReference type="GO" id="GO:0044732">
    <property type="term" value="C:mitotic spindle pole body"/>
    <property type="evidence" value="ECO:0000318"/>
    <property type="project" value="GO_Central"/>
</dbReference>
<dbReference type="GO" id="GO:0051010">
    <property type="term" value="F:microtubule plus-end binding"/>
    <property type="evidence" value="ECO:0007669"/>
    <property type="project" value="EnsemblFungi"/>
</dbReference>
<dbReference type="GO" id="GO:0008608">
    <property type="term" value="P:attachment of spindle microtubules to kinetochore"/>
    <property type="evidence" value="ECO:0000250"/>
    <property type="project" value="UniProtKB"/>
</dbReference>
<dbReference type="GO" id="GO:0051301">
    <property type="term" value="P:cell division"/>
    <property type="evidence" value="ECO:0007669"/>
    <property type="project" value="UniProtKB-KW"/>
</dbReference>
<dbReference type="GO" id="GO:1990758">
    <property type="term" value="P:mitotic sister chromatid biorientation"/>
    <property type="evidence" value="ECO:0000250"/>
    <property type="project" value="UniProtKB"/>
</dbReference>
<dbReference type="GO" id="GO:0051987">
    <property type="term" value="P:positive regulation of attachment of spindle microtubules to kinetochore"/>
    <property type="evidence" value="ECO:0007669"/>
    <property type="project" value="EnsemblFungi"/>
</dbReference>
<dbReference type="GO" id="GO:0031116">
    <property type="term" value="P:positive regulation of microtubule polymerization"/>
    <property type="evidence" value="ECO:0007669"/>
    <property type="project" value="EnsemblFungi"/>
</dbReference>
<dbReference type="GO" id="GO:1990976">
    <property type="term" value="P:protein transport along microtubule to mitotic spindle pole body"/>
    <property type="evidence" value="ECO:0000250"/>
    <property type="project" value="UniProtKB"/>
</dbReference>
<dbReference type="InterPro" id="IPR013963">
    <property type="entry name" value="DASH_Dad2"/>
</dbReference>
<dbReference type="PANTHER" id="PTHR28036">
    <property type="entry name" value="DASH COMPLEX SUBUNIT DAD2"/>
    <property type="match status" value="1"/>
</dbReference>
<dbReference type="PANTHER" id="PTHR28036:SF1">
    <property type="entry name" value="DASH COMPLEX SUBUNIT DAD2"/>
    <property type="match status" value="1"/>
</dbReference>
<dbReference type="Pfam" id="PF08654">
    <property type="entry name" value="DASH_Dad2"/>
    <property type="match status" value="1"/>
</dbReference>
<proteinExistence type="inferred from homology"/>